<keyword id="KW-0028">Amino-acid biosynthesis</keyword>
<keyword id="KW-0055">Arginine biosynthesis</keyword>
<keyword id="KW-0963">Cytoplasm</keyword>
<keyword id="KW-0521">NADP</keyword>
<keyword id="KW-0560">Oxidoreductase</keyword>
<organism>
    <name type="scientific">Methanococcus maripaludis (strain C6 / ATCC BAA-1332)</name>
    <dbReference type="NCBI Taxonomy" id="444158"/>
    <lineage>
        <taxon>Archaea</taxon>
        <taxon>Methanobacteriati</taxon>
        <taxon>Methanobacteriota</taxon>
        <taxon>Methanomada group</taxon>
        <taxon>Methanococci</taxon>
        <taxon>Methanococcales</taxon>
        <taxon>Methanococcaceae</taxon>
        <taxon>Methanococcus</taxon>
    </lineage>
</organism>
<gene>
    <name evidence="1" type="primary">argC</name>
    <name type="ordered locus">MmarC6_0836</name>
</gene>
<evidence type="ECO:0000255" key="1">
    <source>
        <dbReference type="HAMAP-Rule" id="MF_00150"/>
    </source>
</evidence>
<feature type="chain" id="PRO_1000096728" description="N-acetyl-gamma-glutamyl-phosphate reductase">
    <location>
        <begin position="1"/>
        <end position="343"/>
    </location>
</feature>
<feature type="active site" evidence="1">
    <location>
        <position position="149"/>
    </location>
</feature>
<reference key="1">
    <citation type="submission" date="2007-10" db="EMBL/GenBank/DDBJ databases">
        <title>Complete sequence of Methanococcus maripaludis C6.</title>
        <authorList>
            <consortium name="US DOE Joint Genome Institute"/>
            <person name="Copeland A."/>
            <person name="Lucas S."/>
            <person name="Lapidus A."/>
            <person name="Barry K."/>
            <person name="Glavina del Rio T."/>
            <person name="Dalin E."/>
            <person name="Tice H."/>
            <person name="Pitluck S."/>
            <person name="Clum A."/>
            <person name="Schmutz J."/>
            <person name="Larimer F."/>
            <person name="Land M."/>
            <person name="Hauser L."/>
            <person name="Kyrpides N."/>
            <person name="Mikhailova N."/>
            <person name="Sieprawska-Lupa M."/>
            <person name="Whitman W.B."/>
            <person name="Richardson P."/>
        </authorList>
    </citation>
    <scope>NUCLEOTIDE SEQUENCE [LARGE SCALE GENOMIC DNA]</scope>
    <source>
        <strain>C6 / ATCC BAA-1332</strain>
    </source>
</reference>
<accession>A9A8I0</accession>
<dbReference type="EC" id="1.2.1.38" evidence="1"/>
<dbReference type="EMBL" id="CP000867">
    <property type="protein sequence ID" value="ABX01653.1"/>
    <property type="molecule type" value="Genomic_DNA"/>
</dbReference>
<dbReference type="SMR" id="A9A8I0"/>
<dbReference type="STRING" id="444158.MmarC6_0836"/>
<dbReference type="KEGG" id="mmx:MmarC6_0836"/>
<dbReference type="eggNOG" id="arCOG00495">
    <property type="taxonomic scope" value="Archaea"/>
</dbReference>
<dbReference type="HOGENOM" id="CLU_006384_0_1_2"/>
<dbReference type="OrthoDB" id="372053at2157"/>
<dbReference type="PhylomeDB" id="A9A8I0"/>
<dbReference type="UniPathway" id="UPA00068">
    <property type="reaction ID" value="UER00108"/>
</dbReference>
<dbReference type="GO" id="GO:0005737">
    <property type="term" value="C:cytoplasm"/>
    <property type="evidence" value="ECO:0007669"/>
    <property type="project" value="UniProtKB-SubCell"/>
</dbReference>
<dbReference type="GO" id="GO:0003942">
    <property type="term" value="F:N-acetyl-gamma-glutamyl-phosphate reductase activity"/>
    <property type="evidence" value="ECO:0007669"/>
    <property type="project" value="UniProtKB-UniRule"/>
</dbReference>
<dbReference type="GO" id="GO:0051287">
    <property type="term" value="F:NAD binding"/>
    <property type="evidence" value="ECO:0007669"/>
    <property type="project" value="InterPro"/>
</dbReference>
<dbReference type="GO" id="GO:0070401">
    <property type="term" value="F:NADP+ binding"/>
    <property type="evidence" value="ECO:0007669"/>
    <property type="project" value="InterPro"/>
</dbReference>
<dbReference type="GO" id="GO:0006526">
    <property type="term" value="P:L-arginine biosynthetic process"/>
    <property type="evidence" value="ECO:0007669"/>
    <property type="project" value="UniProtKB-UniRule"/>
</dbReference>
<dbReference type="CDD" id="cd23934">
    <property type="entry name" value="AGPR_1_C"/>
    <property type="match status" value="1"/>
</dbReference>
<dbReference type="CDD" id="cd17895">
    <property type="entry name" value="AGPR_1_N"/>
    <property type="match status" value="1"/>
</dbReference>
<dbReference type="FunFam" id="3.30.360.10:FF:000014">
    <property type="entry name" value="N-acetyl-gamma-glutamyl-phosphate reductase"/>
    <property type="match status" value="1"/>
</dbReference>
<dbReference type="Gene3D" id="3.30.360.10">
    <property type="entry name" value="Dihydrodipicolinate Reductase, domain 2"/>
    <property type="match status" value="1"/>
</dbReference>
<dbReference type="Gene3D" id="3.40.50.720">
    <property type="entry name" value="NAD(P)-binding Rossmann-like Domain"/>
    <property type="match status" value="1"/>
</dbReference>
<dbReference type="HAMAP" id="MF_00150">
    <property type="entry name" value="ArgC_type1"/>
    <property type="match status" value="1"/>
</dbReference>
<dbReference type="InterPro" id="IPR023013">
    <property type="entry name" value="AGPR_AS"/>
</dbReference>
<dbReference type="InterPro" id="IPR000706">
    <property type="entry name" value="AGPR_type-1"/>
</dbReference>
<dbReference type="InterPro" id="IPR036291">
    <property type="entry name" value="NAD(P)-bd_dom_sf"/>
</dbReference>
<dbReference type="InterPro" id="IPR050085">
    <property type="entry name" value="NAGSA_dehydrogenase"/>
</dbReference>
<dbReference type="InterPro" id="IPR000534">
    <property type="entry name" value="Semialdehyde_DH_NAD-bd"/>
</dbReference>
<dbReference type="NCBIfam" id="TIGR01850">
    <property type="entry name" value="argC"/>
    <property type="match status" value="1"/>
</dbReference>
<dbReference type="PANTHER" id="PTHR32338:SF10">
    <property type="entry name" value="N-ACETYL-GAMMA-GLUTAMYL-PHOSPHATE REDUCTASE, CHLOROPLASTIC-RELATED"/>
    <property type="match status" value="1"/>
</dbReference>
<dbReference type="PANTHER" id="PTHR32338">
    <property type="entry name" value="N-ACETYL-GAMMA-GLUTAMYL-PHOSPHATE REDUCTASE, CHLOROPLASTIC-RELATED-RELATED"/>
    <property type="match status" value="1"/>
</dbReference>
<dbReference type="Pfam" id="PF01118">
    <property type="entry name" value="Semialdhyde_dh"/>
    <property type="match status" value="1"/>
</dbReference>
<dbReference type="Pfam" id="PF22698">
    <property type="entry name" value="Semialdhyde_dhC_1"/>
    <property type="match status" value="1"/>
</dbReference>
<dbReference type="SMART" id="SM00859">
    <property type="entry name" value="Semialdhyde_dh"/>
    <property type="match status" value="1"/>
</dbReference>
<dbReference type="SUPFAM" id="SSF55347">
    <property type="entry name" value="Glyceraldehyde-3-phosphate dehydrogenase-like, C-terminal domain"/>
    <property type="match status" value="1"/>
</dbReference>
<dbReference type="SUPFAM" id="SSF51735">
    <property type="entry name" value="NAD(P)-binding Rossmann-fold domains"/>
    <property type="match status" value="1"/>
</dbReference>
<dbReference type="PROSITE" id="PS01224">
    <property type="entry name" value="ARGC"/>
    <property type="match status" value="1"/>
</dbReference>
<name>ARGC_METM6</name>
<comment type="function">
    <text evidence="1">Catalyzes the NADPH-dependent reduction of N-acetyl-5-glutamyl phosphate to yield N-acetyl-L-glutamate 5-semialdehyde.</text>
</comment>
<comment type="catalytic activity">
    <reaction evidence="1">
        <text>N-acetyl-L-glutamate 5-semialdehyde + phosphate + NADP(+) = N-acetyl-L-glutamyl 5-phosphate + NADPH + H(+)</text>
        <dbReference type="Rhea" id="RHEA:21588"/>
        <dbReference type="ChEBI" id="CHEBI:15378"/>
        <dbReference type="ChEBI" id="CHEBI:29123"/>
        <dbReference type="ChEBI" id="CHEBI:43474"/>
        <dbReference type="ChEBI" id="CHEBI:57783"/>
        <dbReference type="ChEBI" id="CHEBI:57936"/>
        <dbReference type="ChEBI" id="CHEBI:58349"/>
        <dbReference type="EC" id="1.2.1.38"/>
    </reaction>
</comment>
<comment type="pathway">
    <text evidence="1">Amino-acid biosynthesis; L-arginine biosynthesis; N(2)-acetyl-L-ornithine from L-glutamate: step 3/4.</text>
</comment>
<comment type="subcellular location">
    <subcellularLocation>
        <location evidence="1">Cytoplasm</location>
    </subcellularLocation>
</comment>
<comment type="similarity">
    <text evidence="1">Belongs to the NAGSA dehydrogenase family. Type 1 subfamily.</text>
</comment>
<proteinExistence type="inferred from homology"/>
<protein>
    <recommendedName>
        <fullName evidence="1">N-acetyl-gamma-glutamyl-phosphate reductase</fullName>
        <shortName evidence="1">AGPR</shortName>
        <ecNumber evidence="1">1.2.1.38</ecNumber>
    </recommendedName>
    <alternativeName>
        <fullName evidence="1">N-acetyl-glutamate semialdehyde dehydrogenase</fullName>
        <shortName evidence="1">NAGSA dehydrogenase</shortName>
    </alternativeName>
</protein>
<sequence length="343" mass="37918">MKTVSIIGGTGYTGSELLRLLSNHDNVEVLNVTSRKEAGKKLTDFHPQVRNLRNYNDLEFQNIAPEDIDTDIVFCATPHGASMAIVPILHEKGINVIDLSGDYRFEDIEMYESWYGLKHTGIIESAVYGLPELHREKIKKSKTIANPGCYPTGAILSMAPLVANDLVDERIIFDSKSGVSGAGVVASQTTHFPNVNENLGAYKITNHRHSPEIGKELDYLGNKKLKVSFTPHLLPVTRGILTTAHSYLKEDVSRADVIEIYEEFYKDEFFVRIFEEGMVSLTGVRGTNFCDIGGFEIDQHGRIVVISAIDNLVKGASGQAIQNMNIIMGFDEKEGLSVGGMRP</sequence>